<dbReference type="EC" id="3.4.25.2" evidence="1"/>
<dbReference type="EMBL" id="AE000511">
    <property type="protein sequence ID" value="AAD07583.1"/>
    <property type="molecule type" value="Genomic_DNA"/>
</dbReference>
<dbReference type="PIR" id="C64584">
    <property type="entry name" value="C64584"/>
</dbReference>
<dbReference type="RefSeq" id="NP_207312.1">
    <property type="nucleotide sequence ID" value="NC_000915.1"/>
</dbReference>
<dbReference type="RefSeq" id="WP_000461024.1">
    <property type="nucleotide sequence ID" value="NC_018939.1"/>
</dbReference>
<dbReference type="SMR" id="O25253"/>
<dbReference type="DIP" id="DIP-3441N"/>
<dbReference type="FunCoup" id="O25253">
    <property type="interactions" value="257"/>
</dbReference>
<dbReference type="IntAct" id="O25253">
    <property type="interactions" value="4"/>
</dbReference>
<dbReference type="MINT" id="O25253"/>
<dbReference type="STRING" id="85962.HP_0515"/>
<dbReference type="PaxDb" id="85962-C694_02650"/>
<dbReference type="EnsemblBacteria" id="AAD07583">
    <property type="protein sequence ID" value="AAD07583"/>
    <property type="gene ID" value="HP_0515"/>
</dbReference>
<dbReference type="KEGG" id="heo:C694_02650"/>
<dbReference type="KEGG" id="hpy:HP_0515"/>
<dbReference type="PATRIC" id="fig|85962.47.peg.554"/>
<dbReference type="eggNOG" id="COG5405">
    <property type="taxonomic scope" value="Bacteria"/>
</dbReference>
<dbReference type="InParanoid" id="O25253"/>
<dbReference type="OrthoDB" id="9804884at2"/>
<dbReference type="PhylomeDB" id="O25253"/>
<dbReference type="Proteomes" id="UP000000429">
    <property type="component" value="Chromosome"/>
</dbReference>
<dbReference type="GO" id="GO:0005737">
    <property type="term" value="C:cytoplasm"/>
    <property type="evidence" value="ECO:0000318"/>
    <property type="project" value="GO_Central"/>
</dbReference>
<dbReference type="GO" id="GO:0009376">
    <property type="term" value="C:HslUV protease complex"/>
    <property type="evidence" value="ECO:0007669"/>
    <property type="project" value="UniProtKB-UniRule"/>
</dbReference>
<dbReference type="GO" id="GO:0005839">
    <property type="term" value="C:proteasome core complex"/>
    <property type="evidence" value="ECO:0007669"/>
    <property type="project" value="InterPro"/>
</dbReference>
<dbReference type="GO" id="GO:0046872">
    <property type="term" value="F:metal ion binding"/>
    <property type="evidence" value="ECO:0007669"/>
    <property type="project" value="UniProtKB-KW"/>
</dbReference>
<dbReference type="GO" id="GO:0004298">
    <property type="term" value="F:threonine-type endopeptidase activity"/>
    <property type="evidence" value="ECO:0007669"/>
    <property type="project" value="UniProtKB-KW"/>
</dbReference>
<dbReference type="GO" id="GO:0051603">
    <property type="term" value="P:proteolysis involved in protein catabolic process"/>
    <property type="evidence" value="ECO:0000318"/>
    <property type="project" value="GO_Central"/>
</dbReference>
<dbReference type="Gene3D" id="3.60.20.10">
    <property type="entry name" value="Glutamine Phosphoribosylpyrophosphate, subunit 1, domain 1"/>
    <property type="match status" value="1"/>
</dbReference>
<dbReference type="HAMAP" id="MF_00248">
    <property type="entry name" value="HslV"/>
    <property type="match status" value="1"/>
</dbReference>
<dbReference type="InterPro" id="IPR022281">
    <property type="entry name" value="ATP-dep_Prtase_HsIV_su"/>
</dbReference>
<dbReference type="InterPro" id="IPR029055">
    <property type="entry name" value="Ntn_hydrolases_N"/>
</dbReference>
<dbReference type="InterPro" id="IPR001353">
    <property type="entry name" value="Proteasome_sua/b"/>
</dbReference>
<dbReference type="InterPro" id="IPR023333">
    <property type="entry name" value="Proteasome_suB-type"/>
</dbReference>
<dbReference type="NCBIfam" id="TIGR03692">
    <property type="entry name" value="ATP_dep_HslV"/>
    <property type="match status" value="1"/>
</dbReference>
<dbReference type="NCBIfam" id="NF003964">
    <property type="entry name" value="PRK05456.1"/>
    <property type="match status" value="1"/>
</dbReference>
<dbReference type="PANTHER" id="PTHR32194:SF0">
    <property type="entry name" value="ATP-DEPENDENT PROTEASE SUBUNIT HSLV"/>
    <property type="match status" value="1"/>
</dbReference>
<dbReference type="PANTHER" id="PTHR32194">
    <property type="entry name" value="METALLOPROTEASE TLDD"/>
    <property type="match status" value="1"/>
</dbReference>
<dbReference type="Pfam" id="PF00227">
    <property type="entry name" value="Proteasome"/>
    <property type="match status" value="1"/>
</dbReference>
<dbReference type="SUPFAM" id="SSF56235">
    <property type="entry name" value="N-terminal nucleophile aminohydrolases (Ntn hydrolases)"/>
    <property type="match status" value="1"/>
</dbReference>
<dbReference type="PROSITE" id="PS51476">
    <property type="entry name" value="PROTEASOME_BETA_2"/>
    <property type="match status" value="1"/>
</dbReference>
<comment type="function">
    <text evidence="1">Protease subunit of a proteasome-like degradation complex believed to be a general protein degrading machinery.</text>
</comment>
<comment type="catalytic activity">
    <reaction evidence="1">
        <text>ATP-dependent cleavage of peptide bonds with broad specificity.</text>
        <dbReference type="EC" id="3.4.25.2"/>
    </reaction>
</comment>
<comment type="activity regulation">
    <text evidence="1">Allosterically activated by HslU binding.</text>
</comment>
<comment type="subunit">
    <text evidence="1">A double ring-shaped homohexamer of HslV is capped on each side by a ring-shaped HslU homohexamer. The assembly of the HslU/HslV complex is dependent on binding of ATP.</text>
</comment>
<comment type="subcellular location">
    <subcellularLocation>
        <location evidence="1">Cytoplasm</location>
    </subcellularLocation>
</comment>
<comment type="similarity">
    <text evidence="1">Belongs to the peptidase T1B family. HslV subfamily.</text>
</comment>
<sequence>MFEATTILGYRGELNHKKFALIGGDGQVTLGNCVVKANATKIRSLYHNQVLSGFAGSTADAFSLFDMFERILESKKGDLFKSVVDFSKEWRKDKYLRRLEAMMIVLNFDHIFILSGMGDVLEAEDNKIAAIGSGGNYALSAARALDHFAHLEPRKLVEESLKIAGDLCIYTNTNIKILEL</sequence>
<accession>O25253</accession>
<protein>
    <recommendedName>
        <fullName evidence="1">ATP-dependent protease subunit HslV</fullName>
        <ecNumber evidence="1">3.4.25.2</ecNumber>
    </recommendedName>
</protein>
<proteinExistence type="inferred from homology"/>
<organism>
    <name type="scientific">Helicobacter pylori (strain ATCC 700392 / 26695)</name>
    <name type="common">Campylobacter pylori</name>
    <dbReference type="NCBI Taxonomy" id="85962"/>
    <lineage>
        <taxon>Bacteria</taxon>
        <taxon>Pseudomonadati</taxon>
        <taxon>Campylobacterota</taxon>
        <taxon>Epsilonproteobacteria</taxon>
        <taxon>Campylobacterales</taxon>
        <taxon>Helicobacteraceae</taxon>
        <taxon>Helicobacter</taxon>
    </lineage>
</organism>
<reference key="1">
    <citation type="journal article" date="1997" name="Nature">
        <title>The complete genome sequence of the gastric pathogen Helicobacter pylori.</title>
        <authorList>
            <person name="Tomb J.-F."/>
            <person name="White O."/>
            <person name="Kerlavage A.R."/>
            <person name="Clayton R.A."/>
            <person name="Sutton G.G."/>
            <person name="Fleischmann R.D."/>
            <person name="Ketchum K.A."/>
            <person name="Klenk H.-P."/>
            <person name="Gill S.R."/>
            <person name="Dougherty B.A."/>
            <person name="Nelson K.E."/>
            <person name="Quackenbush J."/>
            <person name="Zhou L."/>
            <person name="Kirkness E.F."/>
            <person name="Peterson S.N."/>
            <person name="Loftus B.J."/>
            <person name="Richardson D.L."/>
            <person name="Dodson R.J."/>
            <person name="Khalak H.G."/>
            <person name="Glodek A."/>
            <person name="McKenney K."/>
            <person name="FitzGerald L.M."/>
            <person name="Lee N."/>
            <person name="Adams M.D."/>
            <person name="Hickey E.K."/>
            <person name="Berg D.E."/>
            <person name="Gocayne J.D."/>
            <person name="Utterback T.R."/>
            <person name="Peterson J.D."/>
            <person name="Kelley J.M."/>
            <person name="Cotton M.D."/>
            <person name="Weidman J.F."/>
            <person name="Fujii C."/>
            <person name="Bowman C."/>
            <person name="Watthey L."/>
            <person name="Wallin E."/>
            <person name="Hayes W.S."/>
            <person name="Borodovsky M."/>
            <person name="Karp P.D."/>
            <person name="Smith H.O."/>
            <person name="Fraser C.M."/>
            <person name="Venter J.C."/>
        </authorList>
    </citation>
    <scope>NUCLEOTIDE SEQUENCE [LARGE SCALE GENOMIC DNA]</scope>
    <source>
        <strain>ATCC 700392 / 26695</strain>
    </source>
</reference>
<name>HSLV_HELPY</name>
<feature type="chain" id="PRO_0000148113" description="ATP-dependent protease subunit HslV">
    <location>
        <begin position="1"/>
        <end position="180"/>
    </location>
</feature>
<feature type="active site" evidence="1">
    <location>
        <position position="5"/>
    </location>
</feature>
<feature type="binding site" evidence="1">
    <location>
        <position position="165"/>
    </location>
    <ligand>
        <name>Na(+)</name>
        <dbReference type="ChEBI" id="CHEBI:29101"/>
    </ligand>
</feature>
<feature type="binding site" evidence="1">
    <location>
        <position position="168"/>
    </location>
    <ligand>
        <name>Na(+)</name>
        <dbReference type="ChEBI" id="CHEBI:29101"/>
    </ligand>
</feature>
<feature type="binding site" evidence="1">
    <location>
        <position position="171"/>
    </location>
    <ligand>
        <name>Na(+)</name>
        <dbReference type="ChEBI" id="CHEBI:29101"/>
    </ligand>
</feature>
<keyword id="KW-0021">Allosteric enzyme</keyword>
<keyword id="KW-0963">Cytoplasm</keyword>
<keyword id="KW-0378">Hydrolase</keyword>
<keyword id="KW-0479">Metal-binding</keyword>
<keyword id="KW-0645">Protease</keyword>
<keyword id="KW-1185">Reference proteome</keyword>
<keyword id="KW-0915">Sodium</keyword>
<keyword id="KW-0888">Threonine protease</keyword>
<gene>
    <name evidence="1" type="primary">hslV</name>
    <name type="ordered locus">HP_0515</name>
</gene>
<evidence type="ECO:0000255" key="1">
    <source>
        <dbReference type="HAMAP-Rule" id="MF_00248"/>
    </source>
</evidence>